<name>EFG_STAAN</name>
<accession>P68789</accession>
<accession>P81683</accession>
<accession>Q9X7M3</accession>
<dbReference type="EMBL" id="BA000018">
    <property type="protein sequence ID" value="BAB41736.1"/>
    <property type="molecule type" value="Genomic_DNA"/>
</dbReference>
<dbReference type="PIR" id="E89822">
    <property type="entry name" value="E89822"/>
</dbReference>
<dbReference type="RefSeq" id="WP_000090315.1">
    <property type="nucleotide sequence ID" value="NC_002745.2"/>
</dbReference>
<dbReference type="SMR" id="P68789"/>
<dbReference type="EnsemblBacteria" id="BAB41736">
    <property type="protein sequence ID" value="BAB41736"/>
    <property type="gene ID" value="BAB41736"/>
</dbReference>
<dbReference type="KEGG" id="sau:SA0505"/>
<dbReference type="HOGENOM" id="CLU_002794_4_1_9"/>
<dbReference type="GO" id="GO:0005737">
    <property type="term" value="C:cytoplasm"/>
    <property type="evidence" value="ECO:0007669"/>
    <property type="project" value="UniProtKB-SubCell"/>
</dbReference>
<dbReference type="GO" id="GO:0005525">
    <property type="term" value="F:GTP binding"/>
    <property type="evidence" value="ECO:0007669"/>
    <property type="project" value="UniProtKB-UniRule"/>
</dbReference>
<dbReference type="GO" id="GO:0003924">
    <property type="term" value="F:GTPase activity"/>
    <property type="evidence" value="ECO:0007669"/>
    <property type="project" value="InterPro"/>
</dbReference>
<dbReference type="GO" id="GO:0003746">
    <property type="term" value="F:translation elongation factor activity"/>
    <property type="evidence" value="ECO:0007669"/>
    <property type="project" value="UniProtKB-UniRule"/>
</dbReference>
<dbReference type="GO" id="GO:0032790">
    <property type="term" value="P:ribosome disassembly"/>
    <property type="evidence" value="ECO:0007669"/>
    <property type="project" value="TreeGrafter"/>
</dbReference>
<dbReference type="CDD" id="cd01886">
    <property type="entry name" value="EF-G"/>
    <property type="match status" value="1"/>
</dbReference>
<dbReference type="CDD" id="cd16262">
    <property type="entry name" value="EFG_III"/>
    <property type="match status" value="1"/>
</dbReference>
<dbReference type="CDD" id="cd01434">
    <property type="entry name" value="EFG_mtEFG1_IV"/>
    <property type="match status" value="1"/>
</dbReference>
<dbReference type="CDD" id="cd03713">
    <property type="entry name" value="EFG_mtEFG_C"/>
    <property type="match status" value="1"/>
</dbReference>
<dbReference type="CDD" id="cd04088">
    <property type="entry name" value="EFG_mtEFG_II"/>
    <property type="match status" value="1"/>
</dbReference>
<dbReference type="FunFam" id="2.40.30.10:FF:000006">
    <property type="entry name" value="Elongation factor G"/>
    <property type="match status" value="1"/>
</dbReference>
<dbReference type="FunFam" id="3.30.230.10:FF:000003">
    <property type="entry name" value="Elongation factor G"/>
    <property type="match status" value="1"/>
</dbReference>
<dbReference type="FunFam" id="3.30.70.240:FF:000001">
    <property type="entry name" value="Elongation factor G"/>
    <property type="match status" value="1"/>
</dbReference>
<dbReference type="FunFam" id="3.30.70.870:FF:000001">
    <property type="entry name" value="Elongation factor G"/>
    <property type="match status" value="1"/>
</dbReference>
<dbReference type="FunFam" id="3.40.50.300:FF:000029">
    <property type="entry name" value="Elongation factor G"/>
    <property type="match status" value="1"/>
</dbReference>
<dbReference type="Gene3D" id="3.30.230.10">
    <property type="match status" value="1"/>
</dbReference>
<dbReference type="Gene3D" id="3.30.70.240">
    <property type="match status" value="1"/>
</dbReference>
<dbReference type="Gene3D" id="3.30.70.870">
    <property type="entry name" value="Elongation Factor G (Translational Gtpase), domain 3"/>
    <property type="match status" value="1"/>
</dbReference>
<dbReference type="Gene3D" id="3.40.50.300">
    <property type="entry name" value="P-loop containing nucleotide triphosphate hydrolases"/>
    <property type="match status" value="1"/>
</dbReference>
<dbReference type="Gene3D" id="2.40.30.10">
    <property type="entry name" value="Translation factors"/>
    <property type="match status" value="1"/>
</dbReference>
<dbReference type="HAMAP" id="MF_00054_B">
    <property type="entry name" value="EF_G_EF_2_B"/>
    <property type="match status" value="1"/>
</dbReference>
<dbReference type="InterPro" id="IPR041095">
    <property type="entry name" value="EFG_II"/>
</dbReference>
<dbReference type="InterPro" id="IPR009022">
    <property type="entry name" value="EFG_III"/>
</dbReference>
<dbReference type="InterPro" id="IPR035647">
    <property type="entry name" value="EFG_III/V"/>
</dbReference>
<dbReference type="InterPro" id="IPR047872">
    <property type="entry name" value="EFG_IV"/>
</dbReference>
<dbReference type="InterPro" id="IPR035649">
    <property type="entry name" value="EFG_V"/>
</dbReference>
<dbReference type="InterPro" id="IPR000640">
    <property type="entry name" value="EFG_V-like"/>
</dbReference>
<dbReference type="InterPro" id="IPR004161">
    <property type="entry name" value="EFTu-like_2"/>
</dbReference>
<dbReference type="InterPro" id="IPR031157">
    <property type="entry name" value="G_TR_CS"/>
</dbReference>
<dbReference type="InterPro" id="IPR027417">
    <property type="entry name" value="P-loop_NTPase"/>
</dbReference>
<dbReference type="InterPro" id="IPR020568">
    <property type="entry name" value="Ribosomal_Su5_D2-typ_SF"/>
</dbReference>
<dbReference type="InterPro" id="IPR014721">
    <property type="entry name" value="Ribsml_uS5_D2-typ_fold_subgr"/>
</dbReference>
<dbReference type="InterPro" id="IPR005225">
    <property type="entry name" value="Small_GTP-bd"/>
</dbReference>
<dbReference type="InterPro" id="IPR000795">
    <property type="entry name" value="T_Tr_GTP-bd_dom"/>
</dbReference>
<dbReference type="InterPro" id="IPR009000">
    <property type="entry name" value="Transl_B-barrel_sf"/>
</dbReference>
<dbReference type="InterPro" id="IPR004540">
    <property type="entry name" value="Transl_elong_EFG/EF2"/>
</dbReference>
<dbReference type="InterPro" id="IPR005517">
    <property type="entry name" value="Transl_elong_EFG/EF2_IV"/>
</dbReference>
<dbReference type="NCBIfam" id="TIGR00484">
    <property type="entry name" value="EF-G"/>
    <property type="match status" value="1"/>
</dbReference>
<dbReference type="NCBIfam" id="NF009379">
    <property type="entry name" value="PRK12740.1-3"/>
    <property type="match status" value="1"/>
</dbReference>
<dbReference type="NCBIfam" id="NF009381">
    <property type="entry name" value="PRK12740.1-5"/>
    <property type="match status" value="1"/>
</dbReference>
<dbReference type="NCBIfam" id="TIGR00231">
    <property type="entry name" value="small_GTP"/>
    <property type="match status" value="1"/>
</dbReference>
<dbReference type="PANTHER" id="PTHR43261:SF1">
    <property type="entry name" value="RIBOSOME-RELEASING FACTOR 2, MITOCHONDRIAL"/>
    <property type="match status" value="1"/>
</dbReference>
<dbReference type="PANTHER" id="PTHR43261">
    <property type="entry name" value="TRANSLATION ELONGATION FACTOR G-RELATED"/>
    <property type="match status" value="1"/>
</dbReference>
<dbReference type="Pfam" id="PF00679">
    <property type="entry name" value="EFG_C"/>
    <property type="match status" value="1"/>
</dbReference>
<dbReference type="Pfam" id="PF14492">
    <property type="entry name" value="EFG_III"/>
    <property type="match status" value="1"/>
</dbReference>
<dbReference type="Pfam" id="PF03764">
    <property type="entry name" value="EFG_IV"/>
    <property type="match status" value="1"/>
</dbReference>
<dbReference type="Pfam" id="PF00009">
    <property type="entry name" value="GTP_EFTU"/>
    <property type="match status" value="1"/>
</dbReference>
<dbReference type="Pfam" id="PF03144">
    <property type="entry name" value="GTP_EFTU_D2"/>
    <property type="match status" value="1"/>
</dbReference>
<dbReference type="PRINTS" id="PR00315">
    <property type="entry name" value="ELONGATNFCT"/>
</dbReference>
<dbReference type="SMART" id="SM00838">
    <property type="entry name" value="EFG_C"/>
    <property type="match status" value="1"/>
</dbReference>
<dbReference type="SMART" id="SM00889">
    <property type="entry name" value="EFG_IV"/>
    <property type="match status" value="1"/>
</dbReference>
<dbReference type="SUPFAM" id="SSF54980">
    <property type="entry name" value="EF-G C-terminal domain-like"/>
    <property type="match status" value="2"/>
</dbReference>
<dbReference type="SUPFAM" id="SSF52540">
    <property type="entry name" value="P-loop containing nucleoside triphosphate hydrolases"/>
    <property type="match status" value="1"/>
</dbReference>
<dbReference type="SUPFAM" id="SSF54211">
    <property type="entry name" value="Ribosomal protein S5 domain 2-like"/>
    <property type="match status" value="1"/>
</dbReference>
<dbReference type="SUPFAM" id="SSF50447">
    <property type="entry name" value="Translation proteins"/>
    <property type="match status" value="1"/>
</dbReference>
<dbReference type="PROSITE" id="PS00301">
    <property type="entry name" value="G_TR_1"/>
    <property type="match status" value="1"/>
</dbReference>
<dbReference type="PROSITE" id="PS51722">
    <property type="entry name" value="G_TR_2"/>
    <property type="match status" value="1"/>
</dbReference>
<feature type="initiator methionine" description="Removed" evidence="1">
    <location>
        <position position="1"/>
    </location>
</feature>
<feature type="chain" id="PRO_0000091216" description="Elongation factor G">
    <location>
        <begin position="2"/>
        <end position="693"/>
    </location>
</feature>
<feature type="domain" description="tr-type G">
    <location>
        <begin position="8"/>
        <end position="282"/>
    </location>
</feature>
<feature type="binding site" evidence="1">
    <location>
        <begin position="17"/>
        <end position="24"/>
    </location>
    <ligand>
        <name>GTP</name>
        <dbReference type="ChEBI" id="CHEBI:37565"/>
    </ligand>
</feature>
<feature type="binding site" evidence="1">
    <location>
        <begin position="81"/>
        <end position="85"/>
    </location>
    <ligand>
        <name>GTP</name>
        <dbReference type="ChEBI" id="CHEBI:37565"/>
    </ligand>
</feature>
<feature type="binding site" evidence="1">
    <location>
        <begin position="135"/>
        <end position="138"/>
    </location>
    <ligand>
        <name>GTP</name>
        <dbReference type="ChEBI" id="CHEBI:37565"/>
    </ligand>
</feature>
<gene>
    <name type="primary">fusA</name>
    <name type="synonym">fus</name>
    <name type="ordered locus">SA0505</name>
</gene>
<reference key="1">
    <citation type="journal article" date="2001" name="Lancet">
        <title>Whole genome sequencing of meticillin-resistant Staphylococcus aureus.</title>
        <authorList>
            <person name="Kuroda M."/>
            <person name="Ohta T."/>
            <person name="Uchiyama I."/>
            <person name="Baba T."/>
            <person name="Yuzawa H."/>
            <person name="Kobayashi I."/>
            <person name="Cui L."/>
            <person name="Oguchi A."/>
            <person name="Aoki K."/>
            <person name="Nagai Y."/>
            <person name="Lian J.-Q."/>
            <person name="Ito T."/>
            <person name="Kanamori M."/>
            <person name="Matsumaru H."/>
            <person name="Maruyama A."/>
            <person name="Murakami H."/>
            <person name="Hosoyama A."/>
            <person name="Mizutani-Ui Y."/>
            <person name="Takahashi N.K."/>
            <person name="Sawano T."/>
            <person name="Inoue R."/>
            <person name="Kaito C."/>
            <person name="Sekimizu K."/>
            <person name="Hirakawa H."/>
            <person name="Kuhara S."/>
            <person name="Goto S."/>
            <person name="Yabuzaki J."/>
            <person name="Kanehisa M."/>
            <person name="Yamashita A."/>
            <person name="Oshima K."/>
            <person name="Furuya K."/>
            <person name="Yoshino C."/>
            <person name="Shiba T."/>
            <person name="Hattori M."/>
            <person name="Ogasawara N."/>
            <person name="Hayashi H."/>
            <person name="Hiramatsu K."/>
        </authorList>
    </citation>
    <scope>NUCLEOTIDE SEQUENCE [LARGE SCALE GENOMIC DNA]</scope>
    <source>
        <strain>N315</strain>
    </source>
</reference>
<reference key="2">
    <citation type="submission" date="2005-11" db="UniProtKB">
        <title>Shotgun proteomic analysis of total protein extract of S. aureus S30 versus N315.</title>
        <authorList>
            <person name="Stenz L."/>
        </authorList>
    </citation>
    <scope>IDENTIFICATION BY MASS SPECTROMETRY</scope>
</reference>
<reference key="3">
    <citation type="submission" date="2007-10" db="UniProtKB">
        <title>Shotgun proteomic analysis of total and membrane protein extracts of S. aureus strain N315.</title>
        <authorList>
            <person name="Vaezzadeh A.R."/>
            <person name="Deshusses J."/>
            <person name="Lescuyer P."/>
            <person name="Hochstrasser D.F."/>
        </authorList>
    </citation>
    <scope>IDENTIFICATION BY MASS SPECTROMETRY [LARGE SCALE ANALYSIS]</scope>
    <source>
        <strain>N315</strain>
    </source>
</reference>
<sequence>MAREFSLEKTRNIGIMAHIDAGKTTTTERILYYTGRIHKIGETHEGASQMDWMEQEQDRGITITSAATTAAWEGHRVNIIDTPGHVDFTVEVERSLRVLDGAVTVLDAQSGVEPQTETVWRQATTYGVPRIVFVNKMDKLGANFEYSVSTLHDRLQANAAPIQLPIGAEDEFEAIIDLVEMKCFKYTNDLGTEIEEIEIPEDHLDRAEEARASLIEAVAETSDELMEKYLGDEEISVSELKEAIRQATTNVEFYPVLCGTAFKNKGVQLMLDAVIDYLPSPLDVKPIIGHRASNPEEEVIAKADDSAEFAALAFKVMTDPYVGKLTFFRVYSGTMTSGSYVKNSTKGKRERVGRLLQMHANSRQEIDTVYSGDIAAAVGLKDTGTGDTLCGEKNDIILESMEFPEPVIHLSVEPKSKADQDKMTQALVKLQEEDPTFHAHTDEETGQVIIGGMGELHLDILVDRMKKEFNVECNVGAPMVSYRETFKSSAQVQGKFSRQSGGRGQYGDVHIEFTPNETGAGFEFENAIVGGVVPREYIPSVEAGLKDAMENGVLAGYPLIDVKAKLYDGSYHDVDSSEMAFKIAASLALKEAAKKCDPVILEPMMKVTIEMPEEYMGDIMGDVTSRRGRVDGMEPRGNAQVVNAYVPLSEMFGYATSLRSNTQGRGTYTMYFDHYAEVPKSIAEDIIKKNKGE</sequence>
<organism>
    <name type="scientific">Staphylococcus aureus (strain N315)</name>
    <dbReference type="NCBI Taxonomy" id="158879"/>
    <lineage>
        <taxon>Bacteria</taxon>
        <taxon>Bacillati</taxon>
        <taxon>Bacillota</taxon>
        <taxon>Bacilli</taxon>
        <taxon>Bacillales</taxon>
        <taxon>Staphylococcaceae</taxon>
        <taxon>Staphylococcus</taxon>
    </lineage>
</organism>
<protein>
    <recommendedName>
        <fullName>Elongation factor G</fullName>
        <shortName>EF-G</shortName>
    </recommendedName>
</protein>
<keyword id="KW-0963">Cytoplasm</keyword>
<keyword id="KW-0251">Elongation factor</keyword>
<keyword id="KW-0342">GTP-binding</keyword>
<keyword id="KW-0547">Nucleotide-binding</keyword>
<keyword id="KW-0648">Protein biosynthesis</keyword>
<evidence type="ECO:0000250" key="1"/>
<evidence type="ECO:0000305" key="2"/>
<comment type="function">
    <text evidence="1">Catalyzes the GTP-dependent ribosomal translocation step during translation elongation. During this step, the ribosome changes from the pre-translocational (PRE) to the post-translocational (POST) state as the newly formed A-site-bound peptidyl-tRNA and P-site-bound deacylated tRNA move to the P and E sites, respectively. Catalyzes the coordinated movement of the two tRNA molecules, the mRNA and conformational changes in the ribosome (By similarity). Has vitronectin-binding activity.</text>
</comment>
<comment type="subcellular location">
    <subcellularLocation>
        <location evidence="1">Cytoplasm</location>
    </subcellularLocation>
</comment>
<comment type="similarity">
    <text evidence="2">Belongs to the TRAFAC class translation factor GTPase superfamily. Classic translation factor GTPase family. EF-G/EF-2 subfamily.</text>
</comment>
<proteinExistence type="evidence at protein level"/>